<organism>
    <name type="scientific">Buchnera aphidicola subsp. Acyrthosiphon pisum (strain APS)</name>
    <name type="common">Acyrthosiphon pisum symbiotic bacterium</name>
    <dbReference type="NCBI Taxonomy" id="107806"/>
    <lineage>
        <taxon>Bacteria</taxon>
        <taxon>Pseudomonadati</taxon>
        <taxon>Pseudomonadota</taxon>
        <taxon>Gammaproteobacteria</taxon>
        <taxon>Enterobacterales</taxon>
        <taxon>Erwiniaceae</taxon>
        <taxon>Buchnera</taxon>
    </lineage>
</organism>
<feature type="chain" id="PRO_0000129195" description="Large ribosomal subunit protein uL4">
    <location>
        <begin position="1"/>
        <end position="201"/>
    </location>
</feature>
<feature type="region of interest" description="Disordered" evidence="2">
    <location>
        <begin position="44"/>
        <end position="68"/>
    </location>
</feature>
<protein>
    <recommendedName>
        <fullName evidence="1">Large ribosomal subunit protein uL4</fullName>
    </recommendedName>
    <alternativeName>
        <fullName evidence="3">50S ribosomal protein L4</fullName>
    </alternativeName>
</protein>
<sequence>MELVVKDVQNVLSVSEIIFARDFNEALIHQVVIAYSASTRQGTRAQKSRAEVSGSGRKPWRQKGTGRARAGSFRSPIWRSGGVTFAAKPQEHSQKVNKKMYRGALKSIFSELIRQKRLIVFENFSLDAPKTKLLVQKLKDINLKNVLIVTNKIDNNLFLASRNLYSVDVKDVHSIDPVSLIAFDHVVITVEAVKRIEEILS</sequence>
<evidence type="ECO:0000255" key="1">
    <source>
        <dbReference type="HAMAP-Rule" id="MF_01328"/>
    </source>
</evidence>
<evidence type="ECO:0000256" key="2">
    <source>
        <dbReference type="SAM" id="MobiDB-lite"/>
    </source>
</evidence>
<evidence type="ECO:0000305" key="3"/>
<name>RL4_BUCAI</name>
<keyword id="KW-1185">Reference proteome</keyword>
<keyword id="KW-0687">Ribonucleoprotein</keyword>
<keyword id="KW-0689">Ribosomal protein</keyword>
<keyword id="KW-0694">RNA-binding</keyword>
<keyword id="KW-0699">rRNA-binding</keyword>
<reference key="1">
    <citation type="journal article" date="2000" name="Nature">
        <title>Genome sequence of the endocellular bacterial symbiont of aphids Buchnera sp. APS.</title>
        <authorList>
            <person name="Shigenobu S."/>
            <person name="Watanabe H."/>
            <person name="Hattori M."/>
            <person name="Sakaki Y."/>
            <person name="Ishikawa H."/>
        </authorList>
    </citation>
    <scope>NUCLEOTIDE SEQUENCE [LARGE SCALE GENOMIC DNA]</scope>
    <source>
        <strain>APS</strain>
    </source>
</reference>
<accession>P57590</accession>
<comment type="function">
    <text evidence="1">One of the primary rRNA binding proteins, this protein initially binds near the 5'-end of the 23S rRNA. It is important during the early stages of 50S assembly. It makes multiple contacts with different domains of the 23S rRNA in the assembled 50S subunit and ribosome.</text>
</comment>
<comment type="function">
    <text evidence="1">Forms part of the polypeptide exit tunnel.</text>
</comment>
<comment type="subunit">
    <text evidence="1">Part of the 50S ribosomal subunit.</text>
</comment>
<comment type="similarity">
    <text evidence="1">Belongs to the universal ribosomal protein uL4 family.</text>
</comment>
<proteinExistence type="inferred from homology"/>
<dbReference type="EMBL" id="BA000003">
    <property type="protein sequence ID" value="BAB13216.1"/>
    <property type="molecule type" value="Genomic_DNA"/>
</dbReference>
<dbReference type="RefSeq" id="NP_240330.1">
    <property type="nucleotide sequence ID" value="NC_002528.1"/>
</dbReference>
<dbReference type="RefSeq" id="WP_010896148.1">
    <property type="nucleotide sequence ID" value="NZ_AP036055.1"/>
</dbReference>
<dbReference type="SMR" id="P57590"/>
<dbReference type="STRING" id="563178.BUAP5A_516"/>
<dbReference type="EnsemblBacteria" id="BAB13216">
    <property type="protein sequence ID" value="BAB13216"/>
    <property type="gene ID" value="BAB13216"/>
</dbReference>
<dbReference type="KEGG" id="buc:BU523"/>
<dbReference type="PATRIC" id="fig|107806.10.peg.528"/>
<dbReference type="eggNOG" id="COG0088">
    <property type="taxonomic scope" value="Bacteria"/>
</dbReference>
<dbReference type="HOGENOM" id="CLU_041575_5_2_6"/>
<dbReference type="Proteomes" id="UP000001806">
    <property type="component" value="Chromosome"/>
</dbReference>
<dbReference type="GO" id="GO:1990904">
    <property type="term" value="C:ribonucleoprotein complex"/>
    <property type="evidence" value="ECO:0007669"/>
    <property type="project" value="UniProtKB-KW"/>
</dbReference>
<dbReference type="GO" id="GO:0005840">
    <property type="term" value="C:ribosome"/>
    <property type="evidence" value="ECO:0007669"/>
    <property type="project" value="UniProtKB-KW"/>
</dbReference>
<dbReference type="GO" id="GO:0019843">
    <property type="term" value="F:rRNA binding"/>
    <property type="evidence" value="ECO:0007669"/>
    <property type="project" value="UniProtKB-UniRule"/>
</dbReference>
<dbReference type="GO" id="GO:0003735">
    <property type="term" value="F:structural constituent of ribosome"/>
    <property type="evidence" value="ECO:0007669"/>
    <property type="project" value="InterPro"/>
</dbReference>
<dbReference type="GO" id="GO:0006412">
    <property type="term" value="P:translation"/>
    <property type="evidence" value="ECO:0007669"/>
    <property type="project" value="UniProtKB-UniRule"/>
</dbReference>
<dbReference type="FunFam" id="3.40.1370.10:FF:000001">
    <property type="entry name" value="50S ribosomal protein L4"/>
    <property type="match status" value="1"/>
</dbReference>
<dbReference type="Gene3D" id="3.40.1370.10">
    <property type="match status" value="1"/>
</dbReference>
<dbReference type="HAMAP" id="MF_01328_B">
    <property type="entry name" value="Ribosomal_uL4_B"/>
    <property type="match status" value="1"/>
</dbReference>
<dbReference type="InterPro" id="IPR002136">
    <property type="entry name" value="Ribosomal_uL4"/>
</dbReference>
<dbReference type="InterPro" id="IPR013005">
    <property type="entry name" value="Ribosomal_uL4-like"/>
</dbReference>
<dbReference type="InterPro" id="IPR023574">
    <property type="entry name" value="Ribosomal_uL4_dom_sf"/>
</dbReference>
<dbReference type="NCBIfam" id="TIGR03953">
    <property type="entry name" value="rplD_bact"/>
    <property type="match status" value="1"/>
</dbReference>
<dbReference type="PANTHER" id="PTHR10746">
    <property type="entry name" value="50S RIBOSOMAL PROTEIN L4"/>
    <property type="match status" value="1"/>
</dbReference>
<dbReference type="PANTHER" id="PTHR10746:SF6">
    <property type="entry name" value="LARGE RIBOSOMAL SUBUNIT PROTEIN UL4M"/>
    <property type="match status" value="1"/>
</dbReference>
<dbReference type="Pfam" id="PF00573">
    <property type="entry name" value="Ribosomal_L4"/>
    <property type="match status" value="1"/>
</dbReference>
<dbReference type="SUPFAM" id="SSF52166">
    <property type="entry name" value="Ribosomal protein L4"/>
    <property type="match status" value="1"/>
</dbReference>
<gene>
    <name evidence="1" type="primary">rplD</name>
    <name type="ordered locus">BU523</name>
</gene>